<evidence type="ECO:0000250" key="1">
    <source>
        <dbReference type="UniProtKB" id="Q96242"/>
    </source>
</evidence>
<evidence type="ECO:0000255" key="2"/>
<evidence type="ECO:0000269" key="3">
    <source>
    </source>
</evidence>
<evidence type="ECO:0000303" key="4">
    <source>
    </source>
</evidence>
<evidence type="ECO:0000305" key="5"/>
<evidence type="ECO:0000312" key="6">
    <source>
        <dbReference type="EMBL" id="KDO44741.1"/>
    </source>
</evidence>
<feature type="chain" id="PRO_0000461369" description="7,8-epoxymelianol synthase CYP88A51">
    <location>
        <begin position="1"/>
        <end position="488"/>
    </location>
</feature>
<feature type="transmembrane region" description="Helical" evidence="2">
    <location>
        <begin position="4"/>
        <end position="24"/>
    </location>
</feature>
<feature type="binding site" description="axial binding residue" evidence="1">
    <location>
        <position position="436"/>
    </location>
    <ligand>
        <name>heme</name>
        <dbReference type="ChEBI" id="CHEBI:30413"/>
    </ligand>
    <ligandPart>
        <name>Fe</name>
        <dbReference type="ChEBI" id="CHEBI:18248"/>
    </ligandPart>
</feature>
<feature type="sequence conflict" description="In Ref. 1; WCJ12492." evidence="5" ref="1">
    <original>L</original>
    <variation>F</variation>
    <location>
        <position position="59"/>
    </location>
</feature>
<feature type="sequence conflict" description="In Ref. 1; WCJ12492." evidence="5" ref="1">
    <original>D</original>
    <variation>A</variation>
    <location>
        <position position="77"/>
    </location>
</feature>
<feature type="sequence conflict" description="In Ref. 1; WCJ12492." evidence="5" ref="1">
    <original>L</original>
    <variation>I</variation>
    <location>
        <position position="273"/>
    </location>
</feature>
<sequence length="488" mass="55816">MDSNFLWPMLAMFLGSLVVMFGFLKKINEWYYVGRLGEKKNSLPPGEMGWPLLGNMLSLIKAFRSSDPDSFIHCLVDRYGRTGVYKSHLFWSPSIVVCTPETCKHVLMDNEKFGRGNPESTKELLGKQTVSLSTEEHKRLRKLTTNPFRGDKALTMYVGYIEDIVIDMLDELGSINKPVVFLFEMRKLAFKVIGHIVFGTTSDHLLELMEKYYTDLLLGLRSPAINIPGFAFHGALKARKLLVKLLEEVLEERKKRSGIEQKKGQKGMIDLLLEAEDENGKKLEDVHIIDLLIINLLAGHESSAHASMWAVLYLNQHPEMLQKAKQEQEEIIKRRPSTQKGLTLEEIKQMDYLAKVIDETMRRSSLFIPIFREAKVDANIQGYTVPKGWQVLVWTRGVHMDPEVYTNPKEFDPSRWDNHTTKPGSYIPFGGGPWICPGADLTKLEIYIFLHYFLLNYKLELQNPECPVAYLPVPRPSDNCLAKVIRVG</sequence>
<proteinExistence type="evidence at protein level"/>
<accession>A0A067E1K2</accession>
<name>C8A51_CITSI</name>
<comment type="function">
    <text evidence="3">Monooxygenase involved in the biosynthesis of limonoids triterpene natural products such as limonin, a compound with insecticidal activity responsible for the bitter taste in citrus (PubMed:36701471). Catalyzes the epoxidation of melianol to produce 7,8-epoxymelianol (PubMed:36701471).</text>
</comment>
<comment type="catalytic activity">
    <reaction evidence="3">
        <text>melianol + reduced [NADPH--hemoprotein reductase] + O2 = 7,8-epoxymelianol + oxidized [NADPH--hemoprotein reductase] + H2O + H(+)</text>
        <dbReference type="Rhea" id="RHEA:80291"/>
        <dbReference type="Rhea" id="RHEA-COMP:11964"/>
        <dbReference type="Rhea" id="RHEA-COMP:11965"/>
        <dbReference type="ChEBI" id="CHEBI:15377"/>
        <dbReference type="ChEBI" id="CHEBI:15378"/>
        <dbReference type="ChEBI" id="CHEBI:15379"/>
        <dbReference type="ChEBI" id="CHEBI:57618"/>
        <dbReference type="ChEBI" id="CHEBI:58210"/>
        <dbReference type="ChEBI" id="CHEBI:231451"/>
        <dbReference type="ChEBI" id="CHEBI:231452"/>
    </reaction>
    <physiologicalReaction direction="left-to-right" evidence="3">
        <dbReference type="Rhea" id="RHEA:80292"/>
    </physiologicalReaction>
</comment>
<comment type="cofactor">
    <cofactor evidence="1">
        <name>heme</name>
        <dbReference type="ChEBI" id="CHEBI:30413"/>
    </cofactor>
</comment>
<comment type="pathway">
    <text evidence="3">Secondary metabolite biosynthesis; terpenoid biosynthesis.</text>
</comment>
<comment type="subcellular location">
    <subcellularLocation>
        <location evidence="2">Membrane</location>
        <topology evidence="2">Single-pass membrane protein</topology>
    </subcellularLocation>
</comment>
<comment type="tissue specificity">
    <text evidence="3">Accumulates in mature fruits and in juice vesicles.</text>
</comment>
<comment type="similarity">
    <text evidence="5">Belongs to the cytochrome P450 family.</text>
</comment>
<reference key="1">
    <citation type="journal article" date="2023" name="Science">
        <title>Complex scaffold remodeling in plant triterpene biosynthesis.</title>
        <authorList>
            <person name="De La Pena R."/>
            <person name="Hodgson H."/>
            <person name="Liu J.C."/>
            <person name="Stephenson M.J."/>
            <person name="Martin A.C."/>
            <person name="Owen C."/>
            <person name="Harkess A."/>
            <person name="Leebens-Mack J."/>
            <person name="Jimenez L.E."/>
            <person name="Osbourn A."/>
            <person name="Sattely E.S."/>
        </authorList>
    </citation>
    <scope>NUCLEOTIDE SEQUENCE [MRNA]</scope>
    <scope>FUNCTION</scope>
    <scope>CATALYTIC ACTIVITY</scope>
    <scope>PATHWAY</scope>
    <scope>TISSUE SPECIFICITY</scope>
    <source>
        <strain>cv. Valencia</strain>
    </source>
</reference>
<reference key="2">
    <citation type="submission" date="2014-04" db="EMBL/GenBank/DDBJ databases">
        <authorList>
            <consortium name="International Citrus Genome Consortium"/>
            <person name="Gmitter F."/>
            <person name="Chen C."/>
            <person name="Farmerie W."/>
            <person name="Harkins T."/>
            <person name="Desany B."/>
            <person name="Mohiuddin M."/>
            <person name="Kodira C."/>
            <person name="Borodovsky M."/>
            <person name="Lomsadze A."/>
            <person name="Burns P."/>
            <person name="Jenkins J."/>
            <person name="Prochnik S."/>
            <person name="Shu S."/>
            <person name="Chapman J."/>
            <person name="Pitluck S."/>
            <person name="Schmutz J."/>
            <person name="Rokhsar D."/>
        </authorList>
    </citation>
    <scope>NUCLEOTIDE SEQUENCE [LARGE SCALE GENOMIC DNA]</scope>
    <source>
        <strain>cv. Ridge Pineapple sweet orange</strain>
    </source>
</reference>
<gene>
    <name evidence="4" type="primary">CYP88A51</name>
    <name evidence="6" type="ORF">CISIN_1g011343mg</name>
</gene>
<protein>
    <recommendedName>
        <fullName evidence="4">7,8-epoxymelianol synthase CYP88A51</fullName>
        <ecNumber evidence="3">1.14.14.-</ecNumber>
    </recommendedName>
    <alternativeName>
        <fullName evidence="4">Cytochrome P450 family 88 subfamily A polypeptide 51</fullName>
        <shortName evidence="4">CsCYP88A51</shortName>
    </alternativeName>
</protein>
<keyword id="KW-0349">Heme</keyword>
<keyword id="KW-0408">Iron</keyword>
<keyword id="KW-0472">Membrane</keyword>
<keyword id="KW-0479">Metal-binding</keyword>
<keyword id="KW-0503">Monooxygenase</keyword>
<keyword id="KW-0560">Oxidoreductase</keyword>
<keyword id="KW-1185">Reference proteome</keyword>
<keyword id="KW-0812">Transmembrane</keyword>
<keyword id="KW-1133">Transmembrane helix</keyword>
<dbReference type="EC" id="1.14.14.-" evidence="3"/>
<dbReference type="EMBL" id="OQ091247">
    <property type="protein sequence ID" value="WCJ12492.1"/>
    <property type="molecule type" value="mRNA"/>
</dbReference>
<dbReference type="EMBL" id="KK785289">
    <property type="protein sequence ID" value="KDO44741.1"/>
    <property type="molecule type" value="Genomic_DNA"/>
</dbReference>
<dbReference type="SMR" id="A0A067E1K2"/>
<dbReference type="STRING" id="2711.A0A067E1K2"/>
<dbReference type="PaxDb" id="2711-XP_006485427-1"/>
<dbReference type="eggNOG" id="KOG0157">
    <property type="taxonomic scope" value="Eukaryota"/>
</dbReference>
<dbReference type="UniPathway" id="UPA00213"/>
<dbReference type="Proteomes" id="UP000027120">
    <property type="component" value="Unassembled WGS sequence"/>
</dbReference>
<dbReference type="GO" id="GO:0005783">
    <property type="term" value="C:endoplasmic reticulum"/>
    <property type="evidence" value="ECO:0000318"/>
    <property type="project" value="GO_Central"/>
</dbReference>
<dbReference type="GO" id="GO:0016020">
    <property type="term" value="C:membrane"/>
    <property type="evidence" value="ECO:0007669"/>
    <property type="project" value="UniProtKB-SubCell"/>
</dbReference>
<dbReference type="GO" id="GO:0051777">
    <property type="term" value="F:ent-kaurenoic acid monooxygenase activity"/>
    <property type="evidence" value="ECO:0000318"/>
    <property type="project" value="GO_Central"/>
</dbReference>
<dbReference type="GO" id="GO:0020037">
    <property type="term" value="F:heme binding"/>
    <property type="evidence" value="ECO:0007669"/>
    <property type="project" value="InterPro"/>
</dbReference>
<dbReference type="GO" id="GO:0005506">
    <property type="term" value="F:iron ion binding"/>
    <property type="evidence" value="ECO:0007669"/>
    <property type="project" value="InterPro"/>
</dbReference>
<dbReference type="GO" id="GO:0048868">
    <property type="term" value="P:pollen tube development"/>
    <property type="evidence" value="ECO:0000318"/>
    <property type="project" value="GO_Central"/>
</dbReference>
<dbReference type="Gene3D" id="1.10.630.10">
    <property type="entry name" value="Cytochrome P450"/>
    <property type="match status" value="1"/>
</dbReference>
<dbReference type="InterPro" id="IPR001128">
    <property type="entry name" value="Cyt_P450"/>
</dbReference>
<dbReference type="InterPro" id="IPR002401">
    <property type="entry name" value="Cyt_P450_E_grp-I"/>
</dbReference>
<dbReference type="InterPro" id="IPR036396">
    <property type="entry name" value="Cyt_P450_sf"/>
</dbReference>
<dbReference type="PANTHER" id="PTHR24286">
    <property type="entry name" value="CYTOCHROME P450 26"/>
    <property type="match status" value="1"/>
</dbReference>
<dbReference type="PANTHER" id="PTHR24286:SF199">
    <property type="entry name" value="CYTOCHROME P450 88D6"/>
    <property type="match status" value="1"/>
</dbReference>
<dbReference type="Pfam" id="PF00067">
    <property type="entry name" value="p450"/>
    <property type="match status" value="1"/>
</dbReference>
<dbReference type="PRINTS" id="PR00463">
    <property type="entry name" value="EP450I"/>
</dbReference>
<dbReference type="PRINTS" id="PR00385">
    <property type="entry name" value="P450"/>
</dbReference>
<dbReference type="SUPFAM" id="SSF48264">
    <property type="entry name" value="Cytochrome P450"/>
    <property type="match status" value="1"/>
</dbReference>
<organism>
    <name type="scientific">Citrus sinensis</name>
    <name type="common">Sweet orange</name>
    <name type="synonym">Citrus aurantium var. sinensis</name>
    <dbReference type="NCBI Taxonomy" id="2711"/>
    <lineage>
        <taxon>Eukaryota</taxon>
        <taxon>Viridiplantae</taxon>
        <taxon>Streptophyta</taxon>
        <taxon>Embryophyta</taxon>
        <taxon>Tracheophyta</taxon>
        <taxon>Spermatophyta</taxon>
        <taxon>Magnoliopsida</taxon>
        <taxon>eudicotyledons</taxon>
        <taxon>Gunneridae</taxon>
        <taxon>Pentapetalae</taxon>
        <taxon>rosids</taxon>
        <taxon>malvids</taxon>
        <taxon>Sapindales</taxon>
        <taxon>Rutaceae</taxon>
        <taxon>Aurantioideae</taxon>
        <taxon>Citrus</taxon>
    </lineage>
</organism>